<evidence type="ECO:0000250" key="1">
    <source>
        <dbReference type="UniProtKB" id="Q9HBE1"/>
    </source>
</evidence>
<evidence type="ECO:0000255" key="2">
    <source>
        <dbReference type="PROSITE-ProRule" id="PRU00037"/>
    </source>
</evidence>
<evidence type="ECO:0000255" key="3">
    <source>
        <dbReference type="PROSITE-ProRule" id="PRU00042"/>
    </source>
</evidence>
<evidence type="ECO:0000256" key="4">
    <source>
        <dbReference type="SAM" id="MobiDB-lite"/>
    </source>
</evidence>
<evidence type="ECO:0000269" key="5">
    <source>
    </source>
</evidence>
<evidence type="ECO:0000269" key="6">
    <source>
    </source>
</evidence>
<evidence type="ECO:0000269" key="7">
    <source>
    </source>
</evidence>
<evidence type="ECO:0000269" key="8">
    <source>
    </source>
</evidence>
<evidence type="ECO:0000305" key="9"/>
<evidence type="ECO:0000312" key="10">
    <source>
        <dbReference type="MGI" id="MGI:1891832"/>
    </source>
</evidence>
<evidence type="ECO:0007744" key="11">
    <source>
        <dbReference type="PDB" id="6GUV"/>
    </source>
</evidence>
<evidence type="ECO:0007829" key="12">
    <source>
        <dbReference type="PDB" id="6GUV"/>
    </source>
</evidence>
<reference key="1">
    <citation type="journal article" date="2009" name="PLoS Biol.">
        <title>Lineage-specific biology revealed by a finished genome assembly of the mouse.</title>
        <authorList>
            <person name="Church D.M."/>
            <person name="Goodstadt L."/>
            <person name="Hillier L.W."/>
            <person name="Zody M.C."/>
            <person name="Goldstein S."/>
            <person name="She X."/>
            <person name="Bult C.J."/>
            <person name="Agarwala R."/>
            <person name="Cherry J.L."/>
            <person name="DiCuccio M."/>
            <person name="Hlavina W."/>
            <person name="Kapustin Y."/>
            <person name="Meric P."/>
            <person name="Maglott D."/>
            <person name="Birtle Z."/>
            <person name="Marques A.C."/>
            <person name="Graves T."/>
            <person name="Zhou S."/>
            <person name="Teague B."/>
            <person name="Potamousis K."/>
            <person name="Churas C."/>
            <person name="Place M."/>
            <person name="Herschleb J."/>
            <person name="Runnheim R."/>
            <person name="Forrest D."/>
            <person name="Amos-Landgraf J."/>
            <person name="Schwartz D.C."/>
            <person name="Cheng Z."/>
            <person name="Lindblad-Toh K."/>
            <person name="Eichler E.E."/>
            <person name="Ponting C.P."/>
        </authorList>
    </citation>
    <scope>NUCLEOTIDE SEQUENCE [LARGE SCALE GENOMIC DNA]</scope>
    <source>
        <strain>C57BL/6J</strain>
    </source>
</reference>
<reference key="2">
    <citation type="journal article" date="2008" name="J. Pathol.">
        <title>PATZ1 gene has a critical role in the spermatogenesis and testicular tumours.</title>
        <authorList>
            <person name="Fedele M."/>
            <person name="Franco R."/>
            <person name="Salvatore G."/>
            <person name="Paronetto M.P."/>
            <person name="Barbagallo F."/>
            <person name="Pero R."/>
            <person name="Chiariotti L."/>
            <person name="Sette C."/>
            <person name="Tramontano D."/>
            <person name="Chieffi G."/>
            <person name="Fusco A."/>
            <person name="Chieffi P."/>
        </authorList>
    </citation>
    <scope>FUNCTION</scope>
    <scope>DISRUPTION PHENOTYPE</scope>
    <scope>TISSUE SPECIFICITY</scope>
    <scope>SUBCELLULAR LOCATION</scope>
</reference>
<reference key="3">
    <citation type="journal article" date="2013" name="J. Cell. Physiol.">
        <title>Embryonic defects and growth alteration in mice with homozygous disruption of the Patz1 gene.</title>
        <authorList>
            <person name="Valentino T."/>
            <person name="Palmieri D."/>
            <person name="Vitiello M."/>
            <person name="Simeone A."/>
            <person name="Palma G."/>
            <person name="Arra C."/>
            <person name="Chieffi P."/>
            <person name="Chiariotti L."/>
            <person name="Fusco A."/>
            <person name="Fedele M."/>
        </authorList>
    </citation>
    <scope>FUNCTION</scope>
    <scope>DISRUPTION PHENOTYPE</scope>
    <scope>TISSUE SPECIFICITY</scope>
</reference>
<reference key="4">
    <citation type="journal article" date="2021" name="Front. Cell Dev. Biol.">
        <title>The Transcription Regulator Patz1 Is Essential for Neural Stem Cell Maintenance and Proliferation.</title>
        <authorList>
            <person name="Mancinelli S."/>
            <person name="Vitiello M."/>
            <person name="Donnini M."/>
            <person name="Mantile F."/>
            <person name="Palma G."/>
            <person name="Luciano A."/>
            <person name="Arra C."/>
            <person name="Cerchia L."/>
            <person name="Liguori G.L."/>
            <person name="Fedele M."/>
        </authorList>
    </citation>
    <scope>FUNCTION</scope>
    <scope>TISSUE SPECIFICITY</scope>
    <scope>DISRUPTION PHENOTYPE</scope>
</reference>
<reference evidence="11" key="5">
    <citation type="journal article" date="2020" name="Acta Crystallogr. D">
        <title>Structural analysis of the PATZ1 BTB domain homodimer.</title>
        <authorList>
            <person name="Piepoli S."/>
            <person name="Alt A.O."/>
            <person name="Atilgan C."/>
            <person name="Mancini E.J."/>
            <person name="Erman B."/>
        </authorList>
    </citation>
    <scope>X-RAY CRYSTALLOGRAPHY (2.29 ANGSTROMS) OF 12-166</scope>
    <scope>SUBUNIT</scope>
</reference>
<comment type="function">
    <text evidence="1 5 6 8">Transcriptional regulator that plays a role in many biological processes such as embryogenesis, senescence, T-cell development or neurogenesis (PubMed:18241078, PubMed:22886576, PubMed:33898458). Interacts with the TP53 protein to control genes that are important in proliferation and in the DNA-damage response. Mechanistically, the interaction inhibits the DNA binding and transcriptional activity of TP53/p53 (By similarity). Part of the transcriptional network modulating regulatory T-cell development and controls the generation of the regulatory T-cell pool under homeostatic conditions (By similarity).</text>
</comment>
<comment type="subunit">
    <text evidence="1 7">Homodimer (PubMed:32496219). Interacts with RNF4. Interacts (via C-terminus) with TP53; this interaction inhibits TP53 ability to activate transcription (By similarity).</text>
</comment>
<comment type="subcellular location">
    <subcellularLocation>
        <location evidence="5">Nucleus</location>
    </subcellularLocation>
</comment>
<comment type="tissue specificity">
    <text evidence="5 6 8">Widely expressed at high levels during embryogenesis, especially in the central nervous system, especially to the actively proliferating neuroblasts in the periventricular neocortical neuroepithelium, in the telencephalic cortical plate and in the hippocampus (PubMed:22886576). Also expressed in a stage-specific manner in the mouse germinal epithelium (PubMed:18241078). While strongly expressed during brain development,m its expression turns down in adult brain (PubMed:33898458).</text>
</comment>
<comment type="disruption phenotype">
    <text evidence="5 6 8">Mutant mice mostly die in utero or soon after birth likely because of developmental defects in the cardiac outflow tract and/or neural tube closure (PubMed:22886576, PubMed:33898458). Few mice that reach the adult life, equally distributed between males and females, show a dwarf phenotype likely due to defects in cell proliferation (PubMed:22886576). Deletion gene also results in disruption of the testis cytoarchitecture and block of spermatogenesis (PubMed:18241078).</text>
</comment>
<name>PATZ1_MOUSE</name>
<gene>
    <name evidence="10" type="primary">Patz1</name>
</gene>
<sequence>MERVNDASCGPSGCYTYQVSRHSTEMLHNLNQQRKNGGRFCDVLLRVGDESFPAHRAVLAACSEYFESVFSAQLGDGGAADGGPADVGGAAAAPGGGAGGSRELEMHTISSKVFGDILDFAYTSRIVVRLESFPELMTAAKFLLMRSVIEICQEVIKQSNVQILVPPARADIMLFRPPGTSDLGFPLDMTNGAAMAANSNGIAGSMQPEEEAARATGAAIAGQASLPVLPGVDRLPMVAGPLSPQLLTSPFPNVASSAPPLTSKRGRGRPRKANLLDSMFGSPGGLREAGILPCGLCGKVFTDANRLRQHEAQHGVTSLQLGYIDLPPPRLGENGLPISEDPDGPRKRSRTRKQVACEICGKIFRDVYHLNRHKLSHSGEKPYSCPVCGLRFKRKDRMSYHVRSHDGSVGKPYICQSCGKGFSRPDHLNGHIKQVHTSERPHKCQTCNASFATRDRLRSHLACHEDKVPCQVCGKYLRAAYMADHLKKHSEGPSNFCSICNRGFSSASYLKVHVKTHHGVPLPQVSRHQEPILNGGAAFHCARTYGNKEGQKCSHQDLIESSDSYGDLSDASDLKTPEKQSANGSFSCDVAVPKNKMESDGEKKYPCPECGSFFRSKSYLNKHIQKVHVRALGGPLGDLGPALGSPFSPQQNMSLLESFGFQIVQSAFASSLVDPEVDQQPMGPEGK</sequence>
<accession>Q5NBY9</accession>
<feature type="chain" id="PRO_0000453933" description="POZ (BTB) and AT hook-containing zinc finger 1">
    <location>
        <begin position="1"/>
        <end position="687"/>
    </location>
</feature>
<feature type="domain" description="BTB" evidence="2">
    <location>
        <begin position="41"/>
        <end position="130"/>
    </location>
</feature>
<feature type="zinc finger region" description="C2H2-type 1" evidence="3">
    <location>
        <begin position="292"/>
        <end position="314"/>
    </location>
</feature>
<feature type="zinc finger region" description="C2H2-type 2" evidence="3">
    <location>
        <begin position="355"/>
        <end position="377"/>
    </location>
</feature>
<feature type="zinc finger region" description="C2H2-type 3" evidence="3">
    <location>
        <begin position="383"/>
        <end position="405"/>
    </location>
</feature>
<feature type="zinc finger region" description="C2H2-type 4" evidence="3">
    <location>
        <begin position="413"/>
        <end position="436"/>
    </location>
</feature>
<feature type="zinc finger region" description="C2H2-type 5" evidence="3">
    <location>
        <begin position="442"/>
        <end position="464"/>
    </location>
</feature>
<feature type="zinc finger region" description="C2H2-type 6" evidence="3">
    <location>
        <begin position="495"/>
        <end position="517"/>
    </location>
</feature>
<feature type="zinc finger region" description="C2H2-type 7" evidence="3">
    <location>
        <begin position="605"/>
        <end position="628"/>
    </location>
</feature>
<feature type="region of interest" description="Disordered" evidence="4">
    <location>
        <begin position="250"/>
        <end position="279"/>
    </location>
</feature>
<feature type="region of interest" description="Disordered" evidence="4">
    <location>
        <begin position="332"/>
        <end position="351"/>
    </location>
</feature>
<feature type="region of interest" description="Disordered" evidence="4">
    <location>
        <begin position="564"/>
        <end position="587"/>
    </location>
</feature>
<feature type="compositionally biased region" description="Polar residues" evidence="4">
    <location>
        <begin position="250"/>
        <end position="260"/>
    </location>
</feature>
<feature type="strand" evidence="12">
    <location>
        <begin position="16"/>
        <end position="19"/>
    </location>
</feature>
<feature type="helix" evidence="12">
    <location>
        <begin position="22"/>
        <end position="35"/>
    </location>
</feature>
<feature type="strand" evidence="12">
    <location>
        <begin position="43"/>
        <end position="47"/>
    </location>
</feature>
<feature type="strand" evidence="12">
    <location>
        <begin position="50"/>
        <end position="54"/>
    </location>
</feature>
<feature type="helix" evidence="12">
    <location>
        <begin position="56"/>
        <end position="62"/>
    </location>
</feature>
<feature type="helix" evidence="12">
    <location>
        <begin position="64"/>
        <end position="72"/>
    </location>
</feature>
<feature type="helix" evidence="12">
    <location>
        <begin position="111"/>
        <end position="123"/>
    </location>
</feature>
<feature type="helix" evidence="12">
    <location>
        <begin position="133"/>
        <end position="143"/>
    </location>
</feature>
<feature type="helix" evidence="12">
    <location>
        <begin position="146"/>
        <end position="158"/>
    </location>
</feature>
<organism>
    <name type="scientific">Mus musculus</name>
    <name type="common">Mouse</name>
    <dbReference type="NCBI Taxonomy" id="10090"/>
    <lineage>
        <taxon>Eukaryota</taxon>
        <taxon>Metazoa</taxon>
        <taxon>Chordata</taxon>
        <taxon>Craniata</taxon>
        <taxon>Vertebrata</taxon>
        <taxon>Euteleostomi</taxon>
        <taxon>Mammalia</taxon>
        <taxon>Eutheria</taxon>
        <taxon>Euarchontoglires</taxon>
        <taxon>Glires</taxon>
        <taxon>Rodentia</taxon>
        <taxon>Myomorpha</taxon>
        <taxon>Muroidea</taxon>
        <taxon>Muridae</taxon>
        <taxon>Murinae</taxon>
        <taxon>Mus</taxon>
        <taxon>Mus</taxon>
    </lineage>
</organism>
<keyword id="KW-0002">3D-structure</keyword>
<keyword id="KW-0479">Metal-binding</keyword>
<keyword id="KW-0539">Nucleus</keyword>
<keyword id="KW-1185">Reference proteome</keyword>
<keyword id="KW-0677">Repeat</keyword>
<keyword id="KW-0862">Zinc</keyword>
<keyword id="KW-0863">Zinc-finger</keyword>
<proteinExistence type="evidence at protein level"/>
<dbReference type="EMBL" id="AL671968">
    <property type="status" value="NOT_ANNOTATED_CDS"/>
    <property type="molecule type" value="Genomic_DNA"/>
</dbReference>
<dbReference type="PDB" id="6GUV">
    <property type="method" value="X-ray"/>
    <property type="resolution" value="2.29 A"/>
    <property type="chains" value="A=12-166"/>
</dbReference>
<dbReference type="PDBsum" id="6GUV"/>
<dbReference type="SMR" id="Q5NBY9"/>
<dbReference type="FunCoup" id="Q5NBY9">
    <property type="interactions" value="3457"/>
</dbReference>
<dbReference type="iPTMnet" id="Q5NBY9"/>
<dbReference type="PhosphoSitePlus" id="Q5NBY9"/>
<dbReference type="PeptideAtlas" id="Q5NBY9"/>
<dbReference type="ProteomicsDB" id="348899"/>
<dbReference type="Antibodypedia" id="25019">
    <property type="antibodies" value="182 antibodies from 25 providers"/>
</dbReference>
<dbReference type="Ensembl" id="ENSMUST00000110043.8">
    <property type="protein sequence ID" value="ENSMUSP00000105670.2"/>
    <property type="gene ID" value="ENSMUSG00000020453.18"/>
</dbReference>
<dbReference type="AGR" id="MGI:1891832"/>
<dbReference type="MGI" id="MGI:1891832">
    <property type="gene designation" value="Patz1"/>
</dbReference>
<dbReference type="VEuPathDB" id="HostDB:ENSMUSG00000020453"/>
<dbReference type="GeneTree" id="ENSGT00940000159296"/>
<dbReference type="InParanoid" id="Q5NBY9"/>
<dbReference type="OMA" id="TKEGQKC"/>
<dbReference type="OrthoDB" id="10072647at2759"/>
<dbReference type="PhylomeDB" id="Q5NBY9"/>
<dbReference type="ChiTaRS" id="Patz1">
    <property type="organism name" value="mouse"/>
</dbReference>
<dbReference type="PRO" id="PR:Q5NBY9"/>
<dbReference type="Proteomes" id="UP000000589">
    <property type="component" value="Chromosome 11"/>
</dbReference>
<dbReference type="RNAct" id="Q5NBY9">
    <property type="molecule type" value="protein"/>
</dbReference>
<dbReference type="Bgee" id="ENSMUSG00000020453">
    <property type="expression patterns" value="Expressed in dorsal pancreas and 200 other cell types or tissues"/>
</dbReference>
<dbReference type="ExpressionAtlas" id="Q5NBY9">
    <property type="expression patterns" value="baseline and differential"/>
</dbReference>
<dbReference type="GO" id="GO:0001673">
    <property type="term" value="C:male germ cell nucleus"/>
    <property type="evidence" value="ECO:0000314"/>
    <property type="project" value="MGI"/>
</dbReference>
<dbReference type="GO" id="GO:0005654">
    <property type="term" value="C:nucleoplasm"/>
    <property type="evidence" value="ECO:0007669"/>
    <property type="project" value="Ensembl"/>
</dbReference>
<dbReference type="GO" id="GO:0005634">
    <property type="term" value="C:nucleus"/>
    <property type="evidence" value="ECO:0000314"/>
    <property type="project" value="MGI"/>
</dbReference>
<dbReference type="GO" id="GO:0003682">
    <property type="term" value="F:chromatin binding"/>
    <property type="evidence" value="ECO:0000314"/>
    <property type="project" value="MGI"/>
</dbReference>
<dbReference type="GO" id="GO:0000978">
    <property type="term" value="F:RNA polymerase II cis-regulatory region sequence-specific DNA binding"/>
    <property type="evidence" value="ECO:0000314"/>
    <property type="project" value="MGI"/>
</dbReference>
<dbReference type="GO" id="GO:0031625">
    <property type="term" value="F:ubiquitin protein ligase binding"/>
    <property type="evidence" value="ECO:0007669"/>
    <property type="project" value="Ensembl"/>
</dbReference>
<dbReference type="GO" id="GO:0008270">
    <property type="term" value="F:zinc ion binding"/>
    <property type="evidence" value="ECO:0007669"/>
    <property type="project" value="UniProtKB-KW"/>
</dbReference>
<dbReference type="GO" id="GO:0008584">
    <property type="term" value="P:male gonad development"/>
    <property type="evidence" value="ECO:0000315"/>
    <property type="project" value="MGI"/>
</dbReference>
<dbReference type="GO" id="GO:0045892">
    <property type="term" value="P:negative regulation of DNA-templated transcription"/>
    <property type="evidence" value="ECO:0000250"/>
    <property type="project" value="MGI"/>
</dbReference>
<dbReference type="GO" id="GO:0010596">
    <property type="term" value="P:negative regulation of endothelial cell migration"/>
    <property type="evidence" value="ECO:0000315"/>
    <property type="project" value="BHF-UCL"/>
</dbReference>
<dbReference type="GO" id="GO:0045893">
    <property type="term" value="P:positive regulation of DNA-templated transcription"/>
    <property type="evidence" value="ECO:0000314"/>
    <property type="project" value="MGI"/>
</dbReference>
<dbReference type="GO" id="GO:0006355">
    <property type="term" value="P:regulation of DNA-templated transcription"/>
    <property type="evidence" value="ECO:0000353"/>
    <property type="project" value="MGI"/>
</dbReference>
<dbReference type="GO" id="GO:0010468">
    <property type="term" value="P:regulation of gene expression"/>
    <property type="evidence" value="ECO:0000314"/>
    <property type="project" value="MGI"/>
</dbReference>
<dbReference type="GO" id="GO:0007283">
    <property type="term" value="P:spermatogenesis"/>
    <property type="evidence" value="ECO:0000315"/>
    <property type="project" value="MGI"/>
</dbReference>
<dbReference type="GO" id="GO:0030217">
    <property type="term" value="P:T cell differentiation"/>
    <property type="evidence" value="ECO:0000314"/>
    <property type="project" value="MGI"/>
</dbReference>
<dbReference type="CDD" id="cd18207">
    <property type="entry name" value="BTB_POZ_ZBTB19_PATZ1"/>
    <property type="match status" value="1"/>
</dbReference>
<dbReference type="FunFam" id="3.30.160.60:FF:000780">
    <property type="entry name" value="myc-associated zinc finger protein isoform X1"/>
    <property type="match status" value="1"/>
</dbReference>
<dbReference type="FunFam" id="3.30.160.60:FF:000147">
    <property type="entry name" value="POZ-, AT hook-, and zinc finger-containing protein 1"/>
    <property type="match status" value="1"/>
</dbReference>
<dbReference type="FunFam" id="3.30.160.60:FF:000404">
    <property type="entry name" value="POZ-, AT hook-, and zinc finger-containing protein 1"/>
    <property type="match status" value="1"/>
</dbReference>
<dbReference type="FunFam" id="3.30.160.60:FF:000513">
    <property type="entry name" value="POZ-, AT hook-, and zinc finger-containing protein 1 isoform X1"/>
    <property type="match status" value="1"/>
</dbReference>
<dbReference type="FunFam" id="3.30.160.60:FF:000945">
    <property type="entry name" value="POZ-, AT hook-, and zinc finger-containing protein 1 isoform X3"/>
    <property type="match status" value="1"/>
</dbReference>
<dbReference type="FunFam" id="3.30.710.10:FF:000028">
    <property type="entry name" value="POZ-, AT hook-, and zinc finger-containing protein 1 isoform X4"/>
    <property type="match status" value="1"/>
</dbReference>
<dbReference type="Gene3D" id="3.30.160.60">
    <property type="entry name" value="Classic Zinc Finger"/>
    <property type="match status" value="6"/>
</dbReference>
<dbReference type="Gene3D" id="3.30.710.10">
    <property type="entry name" value="Potassium Channel Kv1.1, Chain A"/>
    <property type="match status" value="1"/>
</dbReference>
<dbReference type="InterPro" id="IPR000210">
    <property type="entry name" value="BTB/POZ_dom"/>
</dbReference>
<dbReference type="InterPro" id="IPR000637">
    <property type="entry name" value="HMGI/Y_DNA-bd_CS"/>
</dbReference>
<dbReference type="InterPro" id="IPR011333">
    <property type="entry name" value="SKP1/BTB/POZ_sf"/>
</dbReference>
<dbReference type="InterPro" id="IPR036236">
    <property type="entry name" value="Znf_C2H2_sf"/>
</dbReference>
<dbReference type="InterPro" id="IPR013087">
    <property type="entry name" value="Znf_C2H2_type"/>
</dbReference>
<dbReference type="PANTHER" id="PTHR24394">
    <property type="entry name" value="ZINC FINGER PROTEIN"/>
    <property type="match status" value="1"/>
</dbReference>
<dbReference type="PANTHER" id="PTHR24394:SF44">
    <property type="entry name" value="ZINC FINGER PROTEIN 271-LIKE"/>
    <property type="match status" value="1"/>
</dbReference>
<dbReference type="Pfam" id="PF00651">
    <property type="entry name" value="BTB"/>
    <property type="match status" value="1"/>
</dbReference>
<dbReference type="Pfam" id="PF00096">
    <property type="entry name" value="zf-C2H2"/>
    <property type="match status" value="5"/>
</dbReference>
<dbReference type="Pfam" id="PF13912">
    <property type="entry name" value="zf-C2H2_6"/>
    <property type="match status" value="1"/>
</dbReference>
<dbReference type="Pfam" id="PF16637">
    <property type="entry name" value="zf-C2H2_assoc3"/>
    <property type="match status" value="1"/>
</dbReference>
<dbReference type="SMART" id="SM00225">
    <property type="entry name" value="BTB"/>
    <property type="match status" value="1"/>
</dbReference>
<dbReference type="SMART" id="SM00355">
    <property type="entry name" value="ZnF_C2H2"/>
    <property type="match status" value="8"/>
</dbReference>
<dbReference type="SUPFAM" id="SSF57667">
    <property type="entry name" value="beta-beta-alpha zinc fingers"/>
    <property type="match status" value="4"/>
</dbReference>
<dbReference type="SUPFAM" id="SSF54695">
    <property type="entry name" value="POZ domain"/>
    <property type="match status" value="1"/>
</dbReference>
<dbReference type="PROSITE" id="PS50097">
    <property type="entry name" value="BTB"/>
    <property type="match status" value="1"/>
</dbReference>
<dbReference type="PROSITE" id="PS00354">
    <property type="entry name" value="HMGI_Y"/>
    <property type="match status" value="1"/>
</dbReference>
<dbReference type="PROSITE" id="PS00028">
    <property type="entry name" value="ZINC_FINGER_C2H2_1"/>
    <property type="match status" value="7"/>
</dbReference>
<dbReference type="PROSITE" id="PS50157">
    <property type="entry name" value="ZINC_FINGER_C2H2_2"/>
    <property type="match status" value="7"/>
</dbReference>
<protein>
    <recommendedName>
        <fullName evidence="9">POZ (BTB) and AT hook-containing zinc finger 1</fullName>
    </recommendedName>
    <alternativeName>
        <fullName>BTB/POZ domain zinc finger transcription factor</fullName>
    </alternativeName>
    <alternativeName>
        <fullName>Protein kinase A RI subunit alpha-associated protein</fullName>
    </alternativeName>
    <alternativeName>
        <fullName>Zinc finger and BTB domain-containing protein 19</fullName>
    </alternativeName>
    <alternativeName>
        <fullName>Zinc finger protein 278</fullName>
    </alternativeName>
</protein>